<evidence type="ECO:0000255" key="1">
    <source>
        <dbReference type="HAMAP-Rule" id="MF_01302"/>
    </source>
</evidence>
<evidence type="ECO:0000305" key="2"/>
<organism>
    <name type="scientific">Syntrophomonas wolfei subsp. wolfei (strain DSM 2245B / Goettingen)</name>
    <dbReference type="NCBI Taxonomy" id="335541"/>
    <lineage>
        <taxon>Bacteria</taxon>
        <taxon>Bacillati</taxon>
        <taxon>Bacillota</taxon>
        <taxon>Clostridia</taxon>
        <taxon>Eubacteriales</taxon>
        <taxon>Syntrophomonadaceae</taxon>
        <taxon>Syntrophomonas</taxon>
    </lineage>
</organism>
<protein>
    <recommendedName>
        <fullName evidence="1">Small ribosomal subunit protein uS8</fullName>
    </recommendedName>
    <alternativeName>
        <fullName evidence="2">30S ribosomal protein S8</fullName>
    </alternativeName>
</protein>
<proteinExistence type="inferred from homology"/>
<sequence>MVMTDPVADFLTRIRNGNMVMHETVEVPGSRIKLSIARIMQEEGYIKDYEFVEDGKQGIIRIYLKYGPDKKKVITGIKRISKPGLRVYVKKDEIPRVLGGLGTAVISTSKGLMTDKNARKQGLGGEVICYIW</sequence>
<accession>Q0AUJ4</accession>
<name>RS8_SYNWW</name>
<dbReference type="EMBL" id="CP000448">
    <property type="protein sequence ID" value="ABI69610.1"/>
    <property type="molecule type" value="Genomic_DNA"/>
</dbReference>
<dbReference type="RefSeq" id="WP_011641694.1">
    <property type="nucleotide sequence ID" value="NC_008346.1"/>
</dbReference>
<dbReference type="SMR" id="Q0AUJ4"/>
<dbReference type="STRING" id="335541.Swol_2319"/>
<dbReference type="KEGG" id="swo:Swol_2319"/>
<dbReference type="eggNOG" id="COG0096">
    <property type="taxonomic scope" value="Bacteria"/>
</dbReference>
<dbReference type="HOGENOM" id="CLU_098428_0_2_9"/>
<dbReference type="Proteomes" id="UP000001968">
    <property type="component" value="Chromosome"/>
</dbReference>
<dbReference type="GO" id="GO:1990904">
    <property type="term" value="C:ribonucleoprotein complex"/>
    <property type="evidence" value="ECO:0007669"/>
    <property type="project" value="UniProtKB-KW"/>
</dbReference>
<dbReference type="GO" id="GO:0005840">
    <property type="term" value="C:ribosome"/>
    <property type="evidence" value="ECO:0007669"/>
    <property type="project" value="UniProtKB-KW"/>
</dbReference>
<dbReference type="GO" id="GO:0019843">
    <property type="term" value="F:rRNA binding"/>
    <property type="evidence" value="ECO:0007669"/>
    <property type="project" value="UniProtKB-UniRule"/>
</dbReference>
<dbReference type="GO" id="GO:0003735">
    <property type="term" value="F:structural constituent of ribosome"/>
    <property type="evidence" value="ECO:0007669"/>
    <property type="project" value="InterPro"/>
</dbReference>
<dbReference type="GO" id="GO:0006412">
    <property type="term" value="P:translation"/>
    <property type="evidence" value="ECO:0007669"/>
    <property type="project" value="UniProtKB-UniRule"/>
</dbReference>
<dbReference type="FunFam" id="3.30.1370.30:FF:000002">
    <property type="entry name" value="30S ribosomal protein S8"/>
    <property type="match status" value="1"/>
</dbReference>
<dbReference type="FunFam" id="3.30.1490.10:FF:000001">
    <property type="entry name" value="30S ribosomal protein S8"/>
    <property type="match status" value="1"/>
</dbReference>
<dbReference type="Gene3D" id="3.30.1370.30">
    <property type="match status" value="1"/>
</dbReference>
<dbReference type="Gene3D" id="3.30.1490.10">
    <property type="match status" value="1"/>
</dbReference>
<dbReference type="HAMAP" id="MF_01302_B">
    <property type="entry name" value="Ribosomal_uS8_B"/>
    <property type="match status" value="1"/>
</dbReference>
<dbReference type="InterPro" id="IPR000630">
    <property type="entry name" value="Ribosomal_uS8"/>
</dbReference>
<dbReference type="InterPro" id="IPR047863">
    <property type="entry name" value="Ribosomal_uS8_CS"/>
</dbReference>
<dbReference type="InterPro" id="IPR035987">
    <property type="entry name" value="Ribosomal_uS8_sf"/>
</dbReference>
<dbReference type="NCBIfam" id="NF001109">
    <property type="entry name" value="PRK00136.1"/>
    <property type="match status" value="1"/>
</dbReference>
<dbReference type="PANTHER" id="PTHR11758">
    <property type="entry name" value="40S RIBOSOMAL PROTEIN S15A"/>
    <property type="match status" value="1"/>
</dbReference>
<dbReference type="Pfam" id="PF00410">
    <property type="entry name" value="Ribosomal_S8"/>
    <property type="match status" value="1"/>
</dbReference>
<dbReference type="SUPFAM" id="SSF56047">
    <property type="entry name" value="Ribosomal protein S8"/>
    <property type="match status" value="1"/>
</dbReference>
<dbReference type="PROSITE" id="PS00053">
    <property type="entry name" value="RIBOSOMAL_S8"/>
    <property type="match status" value="1"/>
</dbReference>
<feature type="chain" id="PRO_0000290955" description="Small ribosomal subunit protein uS8">
    <location>
        <begin position="1"/>
        <end position="132"/>
    </location>
</feature>
<gene>
    <name evidence="1" type="primary">rpsH</name>
    <name type="ordered locus">Swol_2319</name>
</gene>
<keyword id="KW-1185">Reference proteome</keyword>
<keyword id="KW-0687">Ribonucleoprotein</keyword>
<keyword id="KW-0689">Ribosomal protein</keyword>
<keyword id="KW-0694">RNA-binding</keyword>
<keyword id="KW-0699">rRNA-binding</keyword>
<comment type="function">
    <text evidence="1">One of the primary rRNA binding proteins, it binds directly to 16S rRNA central domain where it helps coordinate assembly of the platform of the 30S subunit.</text>
</comment>
<comment type="subunit">
    <text evidence="1">Part of the 30S ribosomal subunit. Contacts proteins S5 and S12.</text>
</comment>
<comment type="similarity">
    <text evidence="1">Belongs to the universal ribosomal protein uS8 family.</text>
</comment>
<reference key="1">
    <citation type="journal article" date="2010" name="Environ. Microbiol.">
        <title>The genome of Syntrophomonas wolfei: new insights into syntrophic metabolism and biohydrogen production.</title>
        <authorList>
            <person name="Sieber J.R."/>
            <person name="Sims D.R."/>
            <person name="Han C."/>
            <person name="Kim E."/>
            <person name="Lykidis A."/>
            <person name="Lapidus A.L."/>
            <person name="McDonnald E."/>
            <person name="Rohlin L."/>
            <person name="Culley D.E."/>
            <person name="Gunsalus R."/>
            <person name="McInerney M.J."/>
        </authorList>
    </citation>
    <scope>NUCLEOTIDE SEQUENCE [LARGE SCALE GENOMIC DNA]</scope>
    <source>
        <strain>DSM 2245B / Goettingen</strain>
    </source>
</reference>